<reference key="1">
    <citation type="journal article" date="2002" name="Nature">
        <title>Sequence and analysis of chromosome 2 of Dictyostelium discoideum.</title>
        <authorList>
            <person name="Gloeckner G."/>
            <person name="Eichinger L."/>
            <person name="Szafranski K."/>
            <person name="Pachebat J.A."/>
            <person name="Bankier A.T."/>
            <person name="Dear P.H."/>
            <person name="Lehmann R."/>
            <person name="Baumgart C."/>
            <person name="Parra G."/>
            <person name="Abril J.F."/>
            <person name="Guigo R."/>
            <person name="Kumpf K."/>
            <person name="Tunggal B."/>
            <person name="Cox E.C."/>
            <person name="Quail M.A."/>
            <person name="Platzer M."/>
            <person name="Rosenthal A."/>
            <person name="Noegel A.A."/>
        </authorList>
    </citation>
    <scope>NUCLEOTIDE SEQUENCE [LARGE SCALE GENOMIC DNA]</scope>
    <source>
        <strain>AX4</strain>
    </source>
</reference>
<reference key="2">
    <citation type="journal article" date="2005" name="Nature">
        <title>The genome of the social amoeba Dictyostelium discoideum.</title>
        <authorList>
            <person name="Eichinger L."/>
            <person name="Pachebat J.A."/>
            <person name="Gloeckner G."/>
            <person name="Rajandream M.A."/>
            <person name="Sucgang R."/>
            <person name="Berriman M."/>
            <person name="Song J."/>
            <person name="Olsen R."/>
            <person name="Szafranski K."/>
            <person name="Xu Q."/>
            <person name="Tunggal B."/>
            <person name="Kummerfeld S."/>
            <person name="Madera M."/>
            <person name="Konfortov B.A."/>
            <person name="Rivero F."/>
            <person name="Bankier A.T."/>
            <person name="Lehmann R."/>
            <person name="Hamlin N."/>
            <person name="Davies R."/>
            <person name="Gaudet P."/>
            <person name="Fey P."/>
            <person name="Pilcher K."/>
            <person name="Chen G."/>
            <person name="Saunders D."/>
            <person name="Sodergren E.J."/>
            <person name="Davis P."/>
            <person name="Kerhornou A."/>
            <person name="Nie X."/>
            <person name="Hall N."/>
            <person name="Anjard C."/>
            <person name="Hemphill L."/>
            <person name="Bason N."/>
            <person name="Farbrother P."/>
            <person name="Desany B."/>
            <person name="Just E."/>
            <person name="Morio T."/>
            <person name="Rost R."/>
            <person name="Churcher C.M."/>
            <person name="Cooper J."/>
            <person name="Haydock S."/>
            <person name="van Driessche N."/>
            <person name="Cronin A."/>
            <person name="Goodhead I."/>
            <person name="Muzny D.M."/>
            <person name="Mourier T."/>
            <person name="Pain A."/>
            <person name="Lu M."/>
            <person name="Harper D."/>
            <person name="Lindsay R."/>
            <person name="Hauser H."/>
            <person name="James K.D."/>
            <person name="Quiles M."/>
            <person name="Madan Babu M."/>
            <person name="Saito T."/>
            <person name="Buchrieser C."/>
            <person name="Wardroper A."/>
            <person name="Felder M."/>
            <person name="Thangavelu M."/>
            <person name="Johnson D."/>
            <person name="Knights A."/>
            <person name="Loulseged H."/>
            <person name="Mungall K.L."/>
            <person name="Oliver K."/>
            <person name="Price C."/>
            <person name="Quail M.A."/>
            <person name="Urushihara H."/>
            <person name="Hernandez J."/>
            <person name="Rabbinowitsch E."/>
            <person name="Steffen D."/>
            <person name="Sanders M."/>
            <person name="Ma J."/>
            <person name="Kohara Y."/>
            <person name="Sharp S."/>
            <person name="Simmonds M.N."/>
            <person name="Spiegler S."/>
            <person name="Tivey A."/>
            <person name="Sugano S."/>
            <person name="White B."/>
            <person name="Walker D."/>
            <person name="Woodward J.R."/>
            <person name="Winckler T."/>
            <person name="Tanaka Y."/>
            <person name="Shaulsky G."/>
            <person name="Schleicher M."/>
            <person name="Weinstock G.M."/>
            <person name="Rosenthal A."/>
            <person name="Cox E.C."/>
            <person name="Chisholm R.L."/>
            <person name="Gibbs R.A."/>
            <person name="Loomis W.F."/>
            <person name="Platzer M."/>
            <person name="Kay R.R."/>
            <person name="Williams J.G."/>
            <person name="Dear P.H."/>
            <person name="Noegel A.A."/>
            <person name="Barrell B.G."/>
            <person name="Kuspa A."/>
        </authorList>
    </citation>
    <scope>NUCLEOTIDE SEQUENCE [LARGE SCALE GENOMIC DNA]</scope>
    <source>
        <strain>AX4</strain>
    </source>
</reference>
<accession>Q557G3</accession>
<accession>Q86KH6</accession>
<keyword id="KW-0256">Endoplasmic reticulum</keyword>
<keyword id="KW-0931">ER-Golgi transport</keyword>
<keyword id="KW-0333">Golgi apparatus</keyword>
<keyword id="KW-1185">Reference proteome</keyword>
<keyword id="KW-0813">Transport</keyword>
<feature type="chain" id="PRO_0000330743" description="Trafficking protein particle complex subunit 1">
    <location>
        <begin position="1"/>
        <end position="142"/>
    </location>
</feature>
<organism>
    <name type="scientific">Dictyostelium discoideum</name>
    <name type="common">Social amoeba</name>
    <dbReference type="NCBI Taxonomy" id="44689"/>
    <lineage>
        <taxon>Eukaryota</taxon>
        <taxon>Amoebozoa</taxon>
        <taxon>Evosea</taxon>
        <taxon>Eumycetozoa</taxon>
        <taxon>Dictyostelia</taxon>
        <taxon>Dictyosteliales</taxon>
        <taxon>Dictyosteliaceae</taxon>
        <taxon>Dictyostelium</taxon>
    </lineage>
</organism>
<evidence type="ECO:0000250" key="1"/>
<evidence type="ECO:0000305" key="2"/>
<dbReference type="EMBL" id="AAFI02000010">
    <property type="protein sequence ID" value="EAL70688.1"/>
    <property type="molecule type" value="Genomic_DNA"/>
</dbReference>
<dbReference type="EMBL" id="AAFI02000010">
    <property type="protein sequence ID" value="EAL70744.1"/>
    <property type="molecule type" value="Genomic_DNA"/>
</dbReference>
<dbReference type="RefSeq" id="XP_644579.1">
    <property type="nucleotide sequence ID" value="XM_639487.1"/>
</dbReference>
<dbReference type="RefSeq" id="XP_644672.1">
    <property type="nucleotide sequence ID" value="XM_639580.1"/>
</dbReference>
<dbReference type="SMR" id="Q557G3"/>
<dbReference type="FunCoup" id="Q557G3">
    <property type="interactions" value="113"/>
</dbReference>
<dbReference type="STRING" id="44689.Q557G3"/>
<dbReference type="PaxDb" id="44689-DDB0217147"/>
<dbReference type="EnsemblProtists" id="EAL70688">
    <property type="protein sequence ID" value="EAL70688"/>
    <property type="gene ID" value="DDB_G0273467"/>
</dbReference>
<dbReference type="EnsemblProtists" id="EAL70744">
    <property type="protein sequence ID" value="EAL70744"/>
    <property type="gene ID" value="DDB_G0273579"/>
</dbReference>
<dbReference type="GeneID" id="8618944"/>
<dbReference type="GeneID" id="8619033"/>
<dbReference type="KEGG" id="ddi:DDB_G0273467"/>
<dbReference type="KEGG" id="ddi:DDB_G0273579"/>
<dbReference type="dictyBase" id="DDB_G0273467">
    <property type="gene designation" value="trappc1-1"/>
</dbReference>
<dbReference type="dictyBase" id="DDB_G0273579">
    <property type="gene designation" value="trappc1-2"/>
</dbReference>
<dbReference type="VEuPathDB" id="AmoebaDB:DDB_G0273467"/>
<dbReference type="eggNOG" id="KOG3368">
    <property type="taxonomic scope" value="Eukaryota"/>
</dbReference>
<dbReference type="HOGENOM" id="CLU_053380_4_1_1"/>
<dbReference type="InParanoid" id="Q557G3"/>
<dbReference type="OMA" id="YALNYLC"/>
<dbReference type="PhylomeDB" id="Q557G3"/>
<dbReference type="Reactome" id="R-DDI-204005">
    <property type="pathway name" value="COPII-mediated vesicle transport"/>
</dbReference>
<dbReference type="Reactome" id="R-DDI-6798695">
    <property type="pathway name" value="Neutrophil degranulation"/>
</dbReference>
<dbReference type="Reactome" id="R-DDI-8876198">
    <property type="pathway name" value="RAB GEFs exchange GTP for GDP on RABs"/>
</dbReference>
<dbReference type="PRO" id="PR:Q557G3"/>
<dbReference type="Proteomes" id="UP000002195">
    <property type="component" value="Chromosome 2"/>
</dbReference>
<dbReference type="GO" id="GO:0005783">
    <property type="term" value="C:endoplasmic reticulum"/>
    <property type="evidence" value="ECO:0007669"/>
    <property type="project" value="UniProtKB-SubCell"/>
</dbReference>
<dbReference type="GO" id="GO:0005794">
    <property type="term" value="C:Golgi apparatus"/>
    <property type="evidence" value="ECO:0007669"/>
    <property type="project" value="UniProtKB-SubCell"/>
</dbReference>
<dbReference type="GO" id="GO:0030008">
    <property type="term" value="C:TRAPP complex"/>
    <property type="evidence" value="ECO:0000318"/>
    <property type="project" value="GO_Central"/>
</dbReference>
<dbReference type="GO" id="GO:0006888">
    <property type="term" value="P:endoplasmic reticulum to Golgi vesicle-mediated transport"/>
    <property type="evidence" value="ECO:0000318"/>
    <property type="project" value="GO_Central"/>
</dbReference>
<dbReference type="CDD" id="cd14855">
    <property type="entry name" value="TRAPPC1_MUM2"/>
    <property type="match status" value="1"/>
</dbReference>
<dbReference type="FunFam" id="3.30.450.70:FF:000031">
    <property type="match status" value="1"/>
</dbReference>
<dbReference type="Gene3D" id="3.30.450.70">
    <property type="match status" value="1"/>
</dbReference>
<dbReference type="InterPro" id="IPR011012">
    <property type="entry name" value="Longin-like_dom_sf"/>
</dbReference>
<dbReference type="InterPro" id="IPR007233">
    <property type="entry name" value="TRAPPC"/>
</dbReference>
<dbReference type="PANTHER" id="PTHR23249">
    <property type="entry name" value="TRAFFICKING PROTEIN PARTICLE COMPLEX SUBUNIT"/>
    <property type="match status" value="1"/>
</dbReference>
<dbReference type="PANTHER" id="PTHR23249:SF16">
    <property type="entry name" value="TRAFFICKING PROTEIN PARTICLE COMPLEX SUBUNIT 1"/>
    <property type="match status" value="1"/>
</dbReference>
<dbReference type="Pfam" id="PF04099">
    <property type="entry name" value="Sybindin"/>
    <property type="match status" value="1"/>
</dbReference>
<dbReference type="SMART" id="SM01399">
    <property type="entry name" value="Sybindin"/>
    <property type="match status" value="1"/>
</dbReference>
<dbReference type="SUPFAM" id="SSF64356">
    <property type="entry name" value="SNARE-like"/>
    <property type="match status" value="1"/>
</dbReference>
<comment type="function">
    <text evidence="1">May play a role in vesicular transport from endoplasmic reticulum to Golgi.</text>
</comment>
<comment type="subunit">
    <text evidence="1">Part of the multisubunit TRAPP (transport protein particle) complex.</text>
</comment>
<comment type="subcellular location">
    <subcellularLocation>
        <location evidence="1">Golgi apparatus</location>
        <location evidence="1">cis-Golgi network</location>
    </subcellularLocation>
    <subcellularLocation>
        <location evidence="1">Endoplasmic reticulum</location>
    </subcellularLocation>
</comment>
<comment type="similarity">
    <text evidence="2">Belongs to the TRAPP small subunits family. BET5 subfamily.</text>
</comment>
<comment type="caution">
    <text evidence="2">The gene for this protein is duplicated in strains AX3 and AX4. These strains contain a duplication of a segment of 750 kb of chromosome 2 compared to the corresponding sequence in strain AX2.</text>
</comment>
<protein>
    <recommendedName>
        <fullName>Trafficking protein particle complex subunit 1</fullName>
    </recommendedName>
</protein>
<gene>
    <name type="primary">trappc1-1</name>
    <name type="ORF">DDB_G0273467</name>
</gene>
<gene>
    <name type="primary">trappc1-2</name>
    <name type="ORF">DDB_G0273579</name>
</gene>
<sequence length="142" mass="16844">MIYNIYIFNKDGTCIYYEDWNKKKQSQNQSEDQKLLFGMLYSLKAFITSSSPKKIDDKTGFHCYKTSTYKLHYYETLSCIKFIIMSDPNVPDLRDDLKKIYSQIFVEYVIKNPIYKHGTTVKCDTFINQLNLYLKQMPSFSS</sequence>
<name>TPPC1_DICDI</name>
<proteinExistence type="inferred from homology"/>